<sequence length="219" mass="25498">MTQILIVEDEQNLARFLELELTHENYNVDTEYDGQDGLDKALSHYYDLIILDLMLPSINGLEICRKIRQQQSTPIIIITAKSDTYDKVAGLDYGADDYIVKPFDIEELLARIRAILRRQPQKDIIDVNGITIDKNAFKVTVNGAEIELTKTEYDLLYLLAENKNHVMQREQILNHVWGYNSEVETNVVDVYIRYLRNKLKPYDRDKMIETVRGVGYVIR</sequence>
<evidence type="ECO:0000250" key="1"/>
<evidence type="ECO:0000255" key="2">
    <source>
        <dbReference type="PROSITE-ProRule" id="PRU00169"/>
    </source>
</evidence>
<evidence type="ECO:0000255" key="3">
    <source>
        <dbReference type="PROSITE-ProRule" id="PRU01091"/>
    </source>
</evidence>
<gene>
    <name type="primary">arlR</name>
    <name type="ordered locus">SAB1271c</name>
</gene>
<organism>
    <name type="scientific">Staphylococcus aureus (strain bovine RF122 / ET3-1)</name>
    <dbReference type="NCBI Taxonomy" id="273036"/>
    <lineage>
        <taxon>Bacteria</taxon>
        <taxon>Bacillati</taxon>
        <taxon>Bacillota</taxon>
        <taxon>Bacilli</taxon>
        <taxon>Bacillales</taxon>
        <taxon>Staphylococcaceae</taxon>
        <taxon>Staphylococcus</taxon>
    </lineage>
</organism>
<proteinExistence type="inferred from homology"/>
<feature type="chain" id="PRO_0000293441" description="Response regulator ArlR">
    <location>
        <begin position="1"/>
        <end position="219"/>
    </location>
</feature>
<feature type="domain" description="Response regulatory" evidence="2">
    <location>
        <begin position="3"/>
        <end position="116"/>
    </location>
</feature>
<feature type="DNA-binding region" description="OmpR/PhoB-type" evidence="3">
    <location>
        <begin position="122"/>
        <end position="219"/>
    </location>
</feature>
<feature type="modified residue" description="4-aspartylphosphate" evidence="2">
    <location>
        <position position="52"/>
    </location>
</feature>
<accession>Q2YY03</accession>
<keyword id="KW-0010">Activator</keyword>
<keyword id="KW-0963">Cytoplasm</keyword>
<keyword id="KW-0238">DNA-binding</keyword>
<keyword id="KW-0597">Phosphoprotein</keyword>
<keyword id="KW-0678">Repressor</keyword>
<keyword id="KW-0804">Transcription</keyword>
<keyword id="KW-0805">Transcription regulation</keyword>
<keyword id="KW-0902">Two-component regulatory system</keyword>
<keyword id="KW-0843">Virulence</keyword>
<reference key="1">
    <citation type="journal article" date="2007" name="PLoS ONE">
        <title>Molecular correlates of host specialization in Staphylococcus aureus.</title>
        <authorList>
            <person name="Herron-Olson L."/>
            <person name="Fitzgerald J.R."/>
            <person name="Musser J.M."/>
            <person name="Kapur V."/>
        </authorList>
    </citation>
    <scope>NUCLEOTIDE SEQUENCE [LARGE SCALE GENOMIC DNA]</scope>
    <source>
        <strain>bovine RF122 / ET3-1</strain>
    </source>
</reference>
<protein>
    <recommendedName>
        <fullName>Response regulator ArlR</fullName>
    </recommendedName>
</protein>
<comment type="function">
    <text evidence="1">Member of the two-component regulatory system ArlS/ArlR involved in the regulation of adhesion, autolysis, multidrug resistance and virulence.</text>
</comment>
<comment type="subcellular location">
    <subcellularLocation>
        <location evidence="1">Cytoplasm</location>
    </subcellularLocation>
</comment>
<comment type="PTM">
    <text evidence="1">Phosphorylated by ArlS.</text>
</comment>
<dbReference type="EMBL" id="AJ938182">
    <property type="protein sequence ID" value="CAI80960.1"/>
    <property type="molecule type" value="Genomic_DNA"/>
</dbReference>
<dbReference type="RefSeq" id="WP_000192137.1">
    <property type="nucleotide sequence ID" value="NC_007622.1"/>
</dbReference>
<dbReference type="SMR" id="Q2YY03"/>
<dbReference type="KEGG" id="sab:SAB1271c"/>
<dbReference type="HOGENOM" id="CLU_000445_30_1_9"/>
<dbReference type="GO" id="GO:0005829">
    <property type="term" value="C:cytosol"/>
    <property type="evidence" value="ECO:0007669"/>
    <property type="project" value="TreeGrafter"/>
</dbReference>
<dbReference type="GO" id="GO:0032993">
    <property type="term" value="C:protein-DNA complex"/>
    <property type="evidence" value="ECO:0007669"/>
    <property type="project" value="TreeGrafter"/>
</dbReference>
<dbReference type="GO" id="GO:0000156">
    <property type="term" value="F:phosphorelay response regulator activity"/>
    <property type="evidence" value="ECO:0007669"/>
    <property type="project" value="TreeGrafter"/>
</dbReference>
<dbReference type="GO" id="GO:0000976">
    <property type="term" value="F:transcription cis-regulatory region binding"/>
    <property type="evidence" value="ECO:0007669"/>
    <property type="project" value="TreeGrafter"/>
</dbReference>
<dbReference type="GO" id="GO:0006355">
    <property type="term" value="P:regulation of DNA-templated transcription"/>
    <property type="evidence" value="ECO:0007669"/>
    <property type="project" value="InterPro"/>
</dbReference>
<dbReference type="CDD" id="cd00383">
    <property type="entry name" value="trans_reg_C"/>
    <property type="match status" value="1"/>
</dbReference>
<dbReference type="FunFam" id="3.40.50.2300:FF:000001">
    <property type="entry name" value="DNA-binding response regulator PhoB"/>
    <property type="match status" value="1"/>
</dbReference>
<dbReference type="FunFam" id="1.10.10.10:FF:000005">
    <property type="entry name" value="Two-component system response regulator"/>
    <property type="match status" value="1"/>
</dbReference>
<dbReference type="Gene3D" id="3.40.50.2300">
    <property type="match status" value="1"/>
</dbReference>
<dbReference type="Gene3D" id="6.10.250.690">
    <property type="match status" value="1"/>
</dbReference>
<dbReference type="Gene3D" id="1.10.10.10">
    <property type="entry name" value="Winged helix-like DNA-binding domain superfamily/Winged helix DNA-binding domain"/>
    <property type="match status" value="1"/>
</dbReference>
<dbReference type="InterPro" id="IPR011006">
    <property type="entry name" value="CheY-like_superfamily"/>
</dbReference>
<dbReference type="InterPro" id="IPR001867">
    <property type="entry name" value="OmpR/PhoB-type_DNA-bd"/>
</dbReference>
<dbReference type="InterPro" id="IPR016032">
    <property type="entry name" value="Sig_transdc_resp-reg_C-effctor"/>
</dbReference>
<dbReference type="InterPro" id="IPR001789">
    <property type="entry name" value="Sig_transdc_resp-reg_receiver"/>
</dbReference>
<dbReference type="InterPro" id="IPR039420">
    <property type="entry name" value="WalR-like"/>
</dbReference>
<dbReference type="InterPro" id="IPR036388">
    <property type="entry name" value="WH-like_DNA-bd_sf"/>
</dbReference>
<dbReference type="PANTHER" id="PTHR48111">
    <property type="entry name" value="REGULATOR OF RPOS"/>
    <property type="match status" value="1"/>
</dbReference>
<dbReference type="PANTHER" id="PTHR48111:SF22">
    <property type="entry name" value="REGULATOR OF RPOS"/>
    <property type="match status" value="1"/>
</dbReference>
<dbReference type="Pfam" id="PF00072">
    <property type="entry name" value="Response_reg"/>
    <property type="match status" value="1"/>
</dbReference>
<dbReference type="Pfam" id="PF00486">
    <property type="entry name" value="Trans_reg_C"/>
    <property type="match status" value="1"/>
</dbReference>
<dbReference type="SMART" id="SM00448">
    <property type="entry name" value="REC"/>
    <property type="match status" value="1"/>
</dbReference>
<dbReference type="SMART" id="SM00862">
    <property type="entry name" value="Trans_reg_C"/>
    <property type="match status" value="1"/>
</dbReference>
<dbReference type="SUPFAM" id="SSF46894">
    <property type="entry name" value="C-terminal effector domain of the bipartite response regulators"/>
    <property type="match status" value="1"/>
</dbReference>
<dbReference type="SUPFAM" id="SSF52172">
    <property type="entry name" value="CheY-like"/>
    <property type="match status" value="1"/>
</dbReference>
<dbReference type="PROSITE" id="PS51755">
    <property type="entry name" value="OMPR_PHOB"/>
    <property type="match status" value="1"/>
</dbReference>
<dbReference type="PROSITE" id="PS50110">
    <property type="entry name" value="RESPONSE_REGULATORY"/>
    <property type="match status" value="1"/>
</dbReference>
<name>ARLR_STAAB</name>